<dbReference type="EC" id="2.5.1.75" evidence="1"/>
<dbReference type="EMBL" id="CP000569">
    <property type="protein sequence ID" value="ABN75034.1"/>
    <property type="molecule type" value="Genomic_DNA"/>
</dbReference>
<dbReference type="SMR" id="A3N3P8"/>
<dbReference type="STRING" id="416269.APL_1960"/>
<dbReference type="EnsemblBacteria" id="ABN75034">
    <property type="protein sequence ID" value="ABN75034"/>
    <property type="gene ID" value="APL_1960"/>
</dbReference>
<dbReference type="KEGG" id="apl:APL_1960"/>
<dbReference type="eggNOG" id="COG0324">
    <property type="taxonomic scope" value="Bacteria"/>
</dbReference>
<dbReference type="HOGENOM" id="CLU_032616_0_0_6"/>
<dbReference type="Proteomes" id="UP000001432">
    <property type="component" value="Chromosome"/>
</dbReference>
<dbReference type="GO" id="GO:0005524">
    <property type="term" value="F:ATP binding"/>
    <property type="evidence" value="ECO:0007669"/>
    <property type="project" value="UniProtKB-UniRule"/>
</dbReference>
<dbReference type="GO" id="GO:0052381">
    <property type="term" value="F:tRNA dimethylallyltransferase activity"/>
    <property type="evidence" value="ECO:0007669"/>
    <property type="project" value="UniProtKB-UniRule"/>
</dbReference>
<dbReference type="GO" id="GO:0006400">
    <property type="term" value="P:tRNA modification"/>
    <property type="evidence" value="ECO:0007669"/>
    <property type="project" value="TreeGrafter"/>
</dbReference>
<dbReference type="FunFam" id="1.10.20.140:FF:000001">
    <property type="entry name" value="tRNA dimethylallyltransferase"/>
    <property type="match status" value="1"/>
</dbReference>
<dbReference type="Gene3D" id="1.10.20.140">
    <property type="match status" value="1"/>
</dbReference>
<dbReference type="Gene3D" id="3.40.50.300">
    <property type="entry name" value="P-loop containing nucleotide triphosphate hydrolases"/>
    <property type="match status" value="1"/>
</dbReference>
<dbReference type="HAMAP" id="MF_00185">
    <property type="entry name" value="IPP_trans"/>
    <property type="match status" value="1"/>
</dbReference>
<dbReference type="InterPro" id="IPR039657">
    <property type="entry name" value="Dimethylallyltransferase"/>
</dbReference>
<dbReference type="InterPro" id="IPR018022">
    <property type="entry name" value="IPT"/>
</dbReference>
<dbReference type="InterPro" id="IPR027417">
    <property type="entry name" value="P-loop_NTPase"/>
</dbReference>
<dbReference type="NCBIfam" id="TIGR00174">
    <property type="entry name" value="miaA"/>
    <property type="match status" value="1"/>
</dbReference>
<dbReference type="PANTHER" id="PTHR11088">
    <property type="entry name" value="TRNA DIMETHYLALLYLTRANSFERASE"/>
    <property type="match status" value="1"/>
</dbReference>
<dbReference type="PANTHER" id="PTHR11088:SF60">
    <property type="entry name" value="TRNA DIMETHYLALLYLTRANSFERASE"/>
    <property type="match status" value="1"/>
</dbReference>
<dbReference type="Pfam" id="PF01715">
    <property type="entry name" value="IPPT"/>
    <property type="match status" value="1"/>
</dbReference>
<dbReference type="SUPFAM" id="SSF52540">
    <property type="entry name" value="P-loop containing nucleoside triphosphate hydrolases"/>
    <property type="match status" value="1"/>
</dbReference>
<organism>
    <name type="scientific">Actinobacillus pleuropneumoniae serotype 5b (strain L20)</name>
    <dbReference type="NCBI Taxonomy" id="416269"/>
    <lineage>
        <taxon>Bacteria</taxon>
        <taxon>Pseudomonadati</taxon>
        <taxon>Pseudomonadota</taxon>
        <taxon>Gammaproteobacteria</taxon>
        <taxon>Pasteurellales</taxon>
        <taxon>Pasteurellaceae</taxon>
        <taxon>Actinobacillus</taxon>
    </lineage>
</organism>
<evidence type="ECO:0000255" key="1">
    <source>
        <dbReference type="HAMAP-Rule" id="MF_00185"/>
    </source>
</evidence>
<name>MIAA_ACTP2</name>
<protein>
    <recommendedName>
        <fullName evidence="1">tRNA dimethylallyltransferase</fullName>
        <ecNumber evidence="1">2.5.1.75</ecNumber>
    </recommendedName>
    <alternativeName>
        <fullName evidence="1">Dimethylallyl diphosphate:tRNA dimethylallyltransferase</fullName>
        <shortName evidence="1">DMAPP:tRNA dimethylallyltransferase</shortName>
        <shortName evidence="1">DMATase</shortName>
    </alternativeName>
    <alternativeName>
        <fullName evidence="1">Isopentenyl-diphosphate:tRNA isopentenyltransferase</fullName>
        <shortName evidence="1">IPP transferase</shortName>
        <shortName evidence="1">IPPT</shortName>
        <shortName evidence="1">IPTase</shortName>
    </alternativeName>
</protein>
<reference key="1">
    <citation type="journal article" date="2008" name="J. Bacteriol.">
        <title>The complete genome sequence of Actinobacillus pleuropneumoniae L20 (serotype 5b).</title>
        <authorList>
            <person name="Foote S.J."/>
            <person name="Bosse J.T."/>
            <person name="Bouevitch A.B."/>
            <person name="Langford P.R."/>
            <person name="Young N.M."/>
            <person name="Nash J.H.E."/>
        </authorList>
    </citation>
    <scope>NUCLEOTIDE SEQUENCE [LARGE SCALE GENOMIC DNA]</scope>
    <source>
        <strain>L20</strain>
    </source>
</reference>
<keyword id="KW-0067">ATP-binding</keyword>
<keyword id="KW-0460">Magnesium</keyword>
<keyword id="KW-0547">Nucleotide-binding</keyword>
<keyword id="KW-1185">Reference proteome</keyword>
<keyword id="KW-0808">Transferase</keyword>
<keyword id="KW-0819">tRNA processing</keyword>
<feature type="chain" id="PRO_0000377049" description="tRNA dimethylallyltransferase">
    <location>
        <begin position="1"/>
        <end position="304"/>
    </location>
</feature>
<feature type="region of interest" description="Interaction with substrate tRNA" evidence="1">
    <location>
        <begin position="27"/>
        <end position="30"/>
    </location>
</feature>
<feature type="region of interest" description="Interaction with substrate tRNA" evidence="1">
    <location>
        <begin position="151"/>
        <end position="155"/>
    </location>
</feature>
<feature type="region of interest" description="Interaction with substrate tRNA" evidence="1">
    <location>
        <begin position="232"/>
        <end position="237"/>
    </location>
</feature>
<feature type="region of interest" description="Interaction with substrate tRNA" evidence="1">
    <location>
        <begin position="265"/>
        <end position="272"/>
    </location>
</feature>
<feature type="binding site" evidence="1">
    <location>
        <begin position="2"/>
        <end position="9"/>
    </location>
    <ligand>
        <name>ATP</name>
        <dbReference type="ChEBI" id="CHEBI:30616"/>
    </ligand>
</feature>
<feature type="binding site" evidence="1">
    <location>
        <begin position="4"/>
        <end position="9"/>
    </location>
    <ligand>
        <name>substrate</name>
    </ligand>
</feature>
<feature type="site" description="Interaction with substrate tRNA" evidence="1">
    <location>
        <position position="93"/>
    </location>
</feature>
<feature type="site" description="Interaction with substrate tRNA" evidence="1">
    <location>
        <position position="115"/>
    </location>
</feature>
<sequence>MGPTASGKTDLAIALRQTLPVEVISVDSALIYKGMDIGTAKPSKAELELAPHRLIDILDPSESYSAMNFREDALREMAEITASGRIPLLAGGTMLYYKALLEGLSPLPSADPEIRAEIEAKAEQIGWSGLHRELLAIDPIAGKRINPNDSQRINRALEVFYITGKTMTELTAQQGDSLPYNVLQFAIAPQDRAVLHQRIEQRFYKMMELGFQQEVEKLRARSDLHKDLPSIRCVGYRQMWEYLDGDISLDEAIYKGICATRQLAKRQITWLRGWNSEITWLDSLDPTSSKLKMIEKIAQNSIKL</sequence>
<accession>A3N3P8</accession>
<gene>
    <name evidence="1" type="primary">miaA</name>
    <name type="ordered locus">APL_1960</name>
</gene>
<proteinExistence type="inferred from homology"/>
<comment type="function">
    <text evidence="1">Catalyzes the transfer of a dimethylallyl group onto the adenine at position 37 in tRNAs that read codons beginning with uridine, leading to the formation of N6-(dimethylallyl)adenosine (i(6)A).</text>
</comment>
<comment type="catalytic activity">
    <reaction evidence="1">
        <text>adenosine(37) in tRNA + dimethylallyl diphosphate = N(6)-dimethylallyladenosine(37) in tRNA + diphosphate</text>
        <dbReference type="Rhea" id="RHEA:26482"/>
        <dbReference type="Rhea" id="RHEA-COMP:10162"/>
        <dbReference type="Rhea" id="RHEA-COMP:10375"/>
        <dbReference type="ChEBI" id="CHEBI:33019"/>
        <dbReference type="ChEBI" id="CHEBI:57623"/>
        <dbReference type="ChEBI" id="CHEBI:74411"/>
        <dbReference type="ChEBI" id="CHEBI:74415"/>
        <dbReference type="EC" id="2.5.1.75"/>
    </reaction>
</comment>
<comment type="cofactor">
    <cofactor evidence="1">
        <name>Mg(2+)</name>
        <dbReference type="ChEBI" id="CHEBI:18420"/>
    </cofactor>
</comment>
<comment type="subunit">
    <text evidence="1">Monomer.</text>
</comment>
<comment type="similarity">
    <text evidence="1">Belongs to the IPP transferase family.</text>
</comment>